<gene>
    <name evidence="1" type="primary">thiQ</name>
    <name type="ordered locus">Meso_3261</name>
</gene>
<feature type="chain" id="PRO_0000274447" description="Thiamine import ATP-binding protein ThiQ">
    <location>
        <begin position="1"/>
        <end position="246"/>
    </location>
</feature>
<feature type="domain" description="ABC transporter" evidence="1">
    <location>
        <begin position="10"/>
        <end position="239"/>
    </location>
</feature>
<feature type="binding site" evidence="1">
    <location>
        <begin position="41"/>
        <end position="48"/>
    </location>
    <ligand>
        <name>ATP</name>
        <dbReference type="ChEBI" id="CHEBI:30616"/>
    </ligand>
</feature>
<dbReference type="EC" id="7.6.2.15" evidence="1"/>
<dbReference type="EMBL" id="CP000390">
    <property type="protein sequence ID" value="ABG64633.1"/>
    <property type="molecule type" value="Genomic_DNA"/>
</dbReference>
<dbReference type="SMR" id="Q11D92"/>
<dbReference type="STRING" id="266779.Meso_3261"/>
<dbReference type="KEGG" id="mes:Meso_3261"/>
<dbReference type="eggNOG" id="COG3840">
    <property type="taxonomic scope" value="Bacteria"/>
</dbReference>
<dbReference type="HOGENOM" id="CLU_000604_1_22_5"/>
<dbReference type="OrthoDB" id="9802264at2"/>
<dbReference type="GO" id="GO:0005886">
    <property type="term" value="C:plasma membrane"/>
    <property type="evidence" value="ECO:0007669"/>
    <property type="project" value="UniProtKB-SubCell"/>
</dbReference>
<dbReference type="GO" id="GO:0048502">
    <property type="term" value="F:ABC-type thiamine transporter activity"/>
    <property type="evidence" value="ECO:0007669"/>
    <property type="project" value="UniProtKB-EC"/>
</dbReference>
<dbReference type="GO" id="GO:0005524">
    <property type="term" value="F:ATP binding"/>
    <property type="evidence" value="ECO:0007669"/>
    <property type="project" value="UniProtKB-KW"/>
</dbReference>
<dbReference type="GO" id="GO:0016887">
    <property type="term" value="F:ATP hydrolysis activity"/>
    <property type="evidence" value="ECO:0007669"/>
    <property type="project" value="InterPro"/>
</dbReference>
<dbReference type="Gene3D" id="3.40.50.300">
    <property type="entry name" value="P-loop containing nucleotide triphosphate hydrolases"/>
    <property type="match status" value="1"/>
</dbReference>
<dbReference type="InterPro" id="IPR003593">
    <property type="entry name" value="AAA+_ATPase"/>
</dbReference>
<dbReference type="InterPro" id="IPR050093">
    <property type="entry name" value="ABC_SmlMolc_Importer"/>
</dbReference>
<dbReference type="InterPro" id="IPR003439">
    <property type="entry name" value="ABC_transporter-like_ATP-bd"/>
</dbReference>
<dbReference type="InterPro" id="IPR017871">
    <property type="entry name" value="ABC_transporter-like_CS"/>
</dbReference>
<dbReference type="InterPro" id="IPR027417">
    <property type="entry name" value="P-loop_NTPase"/>
</dbReference>
<dbReference type="InterPro" id="IPR005968">
    <property type="entry name" value="Thiamine_ABC_ThiQ"/>
</dbReference>
<dbReference type="NCBIfam" id="TIGR01277">
    <property type="entry name" value="thiQ"/>
    <property type="match status" value="1"/>
</dbReference>
<dbReference type="PANTHER" id="PTHR42781">
    <property type="entry name" value="SPERMIDINE/PUTRESCINE IMPORT ATP-BINDING PROTEIN POTA"/>
    <property type="match status" value="1"/>
</dbReference>
<dbReference type="PANTHER" id="PTHR42781:SF1">
    <property type="entry name" value="THIAMINE IMPORT ATP-BINDING PROTEIN THIQ"/>
    <property type="match status" value="1"/>
</dbReference>
<dbReference type="Pfam" id="PF00005">
    <property type="entry name" value="ABC_tran"/>
    <property type="match status" value="1"/>
</dbReference>
<dbReference type="SMART" id="SM00382">
    <property type="entry name" value="AAA"/>
    <property type="match status" value="1"/>
</dbReference>
<dbReference type="SUPFAM" id="SSF52540">
    <property type="entry name" value="P-loop containing nucleoside triphosphate hydrolases"/>
    <property type="match status" value="1"/>
</dbReference>
<dbReference type="PROSITE" id="PS00211">
    <property type="entry name" value="ABC_TRANSPORTER_1"/>
    <property type="match status" value="1"/>
</dbReference>
<dbReference type="PROSITE" id="PS50893">
    <property type="entry name" value="ABC_TRANSPORTER_2"/>
    <property type="match status" value="1"/>
</dbReference>
<dbReference type="PROSITE" id="PS51288">
    <property type="entry name" value="THIQ"/>
    <property type="match status" value="1"/>
</dbReference>
<accession>Q11D92</accession>
<comment type="function">
    <text evidence="1">Part of the ABC transporter complex ThiBPQ involved in thiamine import. Responsible for energy coupling to the transport system.</text>
</comment>
<comment type="catalytic activity">
    <reaction evidence="1">
        <text>thiamine(out) + ATP + H2O = thiamine(in) + ADP + phosphate + H(+)</text>
        <dbReference type="Rhea" id="RHEA:29811"/>
        <dbReference type="ChEBI" id="CHEBI:15377"/>
        <dbReference type="ChEBI" id="CHEBI:15378"/>
        <dbReference type="ChEBI" id="CHEBI:18385"/>
        <dbReference type="ChEBI" id="CHEBI:30616"/>
        <dbReference type="ChEBI" id="CHEBI:43474"/>
        <dbReference type="ChEBI" id="CHEBI:456216"/>
        <dbReference type="EC" id="7.6.2.15"/>
    </reaction>
</comment>
<comment type="subunit">
    <text evidence="1">The complex is composed of two ATP-binding proteins (ThiQ), two transmembrane proteins (ThiP) and a solute-binding protein (ThiB).</text>
</comment>
<comment type="subcellular location">
    <subcellularLocation>
        <location evidence="1">Cell inner membrane</location>
        <topology evidence="1">Peripheral membrane protein</topology>
    </subcellularLocation>
</comment>
<comment type="similarity">
    <text evidence="1">Belongs to the ABC transporter superfamily. Thiamine importer (TC 3.A.1.19.1) family.</text>
</comment>
<keyword id="KW-0067">ATP-binding</keyword>
<keyword id="KW-0997">Cell inner membrane</keyword>
<keyword id="KW-1003">Cell membrane</keyword>
<keyword id="KW-0472">Membrane</keyword>
<keyword id="KW-0547">Nucleotide-binding</keyword>
<keyword id="KW-1278">Translocase</keyword>
<keyword id="KW-0813">Transport</keyword>
<name>THIQ_CHESB</name>
<evidence type="ECO:0000255" key="1">
    <source>
        <dbReference type="HAMAP-Rule" id="MF_01723"/>
    </source>
</evidence>
<organism>
    <name type="scientific">Chelativorans sp. (strain BNC1)</name>
    <dbReference type="NCBI Taxonomy" id="266779"/>
    <lineage>
        <taxon>Bacteria</taxon>
        <taxon>Pseudomonadati</taxon>
        <taxon>Pseudomonadota</taxon>
        <taxon>Alphaproteobacteria</taxon>
        <taxon>Hyphomicrobiales</taxon>
        <taxon>Phyllobacteriaceae</taxon>
        <taxon>Chelativorans</taxon>
    </lineage>
</organism>
<proteinExistence type="inferred from homology"/>
<reference key="1">
    <citation type="submission" date="2006-06" db="EMBL/GenBank/DDBJ databases">
        <title>Complete sequence of chromosome of Mesorhizobium sp. BNC1.</title>
        <authorList>
            <consortium name="US DOE Joint Genome Institute"/>
            <person name="Copeland A."/>
            <person name="Lucas S."/>
            <person name="Lapidus A."/>
            <person name="Barry K."/>
            <person name="Detter J.C."/>
            <person name="Glavina del Rio T."/>
            <person name="Hammon N."/>
            <person name="Israni S."/>
            <person name="Dalin E."/>
            <person name="Tice H."/>
            <person name="Pitluck S."/>
            <person name="Chertkov O."/>
            <person name="Brettin T."/>
            <person name="Bruce D."/>
            <person name="Han C."/>
            <person name="Tapia R."/>
            <person name="Gilna P."/>
            <person name="Schmutz J."/>
            <person name="Larimer F."/>
            <person name="Land M."/>
            <person name="Hauser L."/>
            <person name="Kyrpides N."/>
            <person name="Mikhailova N."/>
            <person name="Richardson P."/>
        </authorList>
    </citation>
    <scope>NUCLEOTIDE SEQUENCE [LARGE SCALE GENOMIC DNA]</scope>
    <source>
        <strain>BNC1</strain>
    </source>
</reference>
<protein>
    <recommendedName>
        <fullName evidence="1">Thiamine import ATP-binding protein ThiQ</fullName>
        <ecNumber evidence="1">7.6.2.15</ecNumber>
    </recommendedName>
</protein>
<sequence length="246" mass="26647">MMVPQQGAVVKLDALAFAYPGGQAMRFDLLVPASEIVALMGPSGSGKSTLLNLIAGFERPDSGQVLIGSGDVTRLPPFKRPVSMIFQENNLFSHLTVEQNVGLGRSPTLRLSDGDRAAVSEAIARTGLAGKEQRLPRQLSGGERQRVALARVLVRRQPVLLLDEPFASLGPALRDEMLDLVAELHRDQQMTVIMATHDPRDAERLSNRLLFIENGTIAADGATSSFLAGQGPPAFARYLGERKRLR</sequence>